<protein>
    <recommendedName>
        <fullName evidence="1">Small ribosomal subunit protein uS14A</fullName>
    </recommendedName>
    <alternativeName>
        <fullName evidence="3">30S ribosomal protein S14</fullName>
    </alternativeName>
</protein>
<name>RS14_MYCS2</name>
<evidence type="ECO:0000255" key="1">
    <source>
        <dbReference type="HAMAP-Rule" id="MF_00537"/>
    </source>
</evidence>
<evidence type="ECO:0000269" key="2">
    <source>
    </source>
</evidence>
<evidence type="ECO:0000305" key="3"/>
<feature type="initiator methionine" description="Removed" evidence="2">
    <location>
        <position position="1"/>
    </location>
</feature>
<feature type="chain" id="PRO_1000128456" description="Small ribosomal subunit protein uS14A">
    <location>
        <begin position="2"/>
        <end position="101"/>
    </location>
</feature>
<proteinExistence type="evidence at protein level"/>
<sequence>MAKKSKIVKNEQRRELVQRYAERRAELKRTIRDPASSPERRAAAVSALQRLPRDSSPVRLRNRDVVDGRPRGHLRKFGLSRVRVREMAHRGELPGVRKASW</sequence>
<gene>
    <name evidence="1" type="primary">rpsN</name>
    <name type="ordered locus">MSMEG_6066</name>
    <name type="ordered locus">MSMEI_5906</name>
</gene>
<keyword id="KW-0002">3D-structure</keyword>
<keyword id="KW-1185">Reference proteome</keyword>
<keyword id="KW-0687">Ribonucleoprotein</keyword>
<keyword id="KW-0689">Ribosomal protein</keyword>
<keyword id="KW-0694">RNA-binding</keyword>
<keyword id="KW-0699">rRNA-binding</keyword>
<organism>
    <name type="scientific">Mycolicibacterium smegmatis (strain ATCC 700084 / mc(2)155)</name>
    <name type="common">Mycobacterium smegmatis</name>
    <dbReference type="NCBI Taxonomy" id="246196"/>
    <lineage>
        <taxon>Bacteria</taxon>
        <taxon>Bacillati</taxon>
        <taxon>Actinomycetota</taxon>
        <taxon>Actinomycetes</taxon>
        <taxon>Mycobacteriales</taxon>
        <taxon>Mycobacteriaceae</taxon>
        <taxon>Mycolicibacterium</taxon>
    </lineage>
</organism>
<comment type="function">
    <text evidence="1">Binds 16S rRNA, required for the assembly of 30S particles and may also be responsible for determining the conformation of the 16S rRNA at the A site.</text>
</comment>
<comment type="subunit">
    <text evidence="1">Part of the 30S ribosomal subunit. Contacts proteins S3 and S10.</text>
</comment>
<comment type="similarity">
    <text evidence="1">Belongs to the universal ribosomal protein uS14 family.</text>
</comment>
<dbReference type="EMBL" id="CP000480">
    <property type="protein sequence ID" value="ABK73792.1"/>
    <property type="molecule type" value="Genomic_DNA"/>
</dbReference>
<dbReference type="EMBL" id="CP001663">
    <property type="protein sequence ID" value="AFP42339.1"/>
    <property type="molecule type" value="Genomic_DNA"/>
</dbReference>
<dbReference type="RefSeq" id="WP_003897467.1">
    <property type="nucleotide sequence ID" value="NZ_SIJM01000046.1"/>
</dbReference>
<dbReference type="RefSeq" id="YP_890288.1">
    <property type="nucleotide sequence ID" value="NC_008596.1"/>
</dbReference>
<dbReference type="PDB" id="6DZI">
    <property type="method" value="EM"/>
    <property type="resolution" value="3.46 A"/>
    <property type="chains" value="9=2-101"/>
</dbReference>
<dbReference type="PDB" id="6DZK">
    <property type="method" value="EM"/>
    <property type="resolution" value="3.60 A"/>
    <property type="chains" value="N=2-101"/>
</dbReference>
<dbReference type="PDB" id="8FR8">
    <property type="method" value="EM"/>
    <property type="resolution" value="2.76 A"/>
    <property type="chains" value="9=2-101"/>
</dbReference>
<dbReference type="PDB" id="8WHX">
    <property type="method" value="EM"/>
    <property type="resolution" value="2.80 A"/>
    <property type="chains" value="o=1-101"/>
</dbReference>
<dbReference type="PDB" id="8WI7">
    <property type="method" value="EM"/>
    <property type="resolution" value="3.50 A"/>
    <property type="chains" value="o=1-101"/>
</dbReference>
<dbReference type="PDB" id="8WIB">
    <property type="method" value="EM"/>
    <property type="resolution" value="3.50 A"/>
    <property type="chains" value="o=1-101"/>
</dbReference>
<dbReference type="PDB" id="8WID">
    <property type="method" value="EM"/>
    <property type="resolution" value="3.50 A"/>
    <property type="chains" value="o=1-101"/>
</dbReference>
<dbReference type="PDB" id="8WIF">
    <property type="method" value="EM"/>
    <property type="resolution" value="2.90 A"/>
    <property type="chains" value="o=1-101"/>
</dbReference>
<dbReference type="PDBsum" id="6DZI"/>
<dbReference type="PDBsum" id="6DZK"/>
<dbReference type="PDBsum" id="8FR8"/>
<dbReference type="PDBsum" id="8WHX"/>
<dbReference type="PDBsum" id="8WI7"/>
<dbReference type="PDBsum" id="8WIB"/>
<dbReference type="PDBsum" id="8WID"/>
<dbReference type="PDBsum" id="8WIF"/>
<dbReference type="EMDB" id="EMD-29397"/>
<dbReference type="EMDB" id="EMD-37551"/>
<dbReference type="EMDB" id="EMD-37559"/>
<dbReference type="EMDB" id="EMD-37562"/>
<dbReference type="EMDB" id="EMD-37564"/>
<dbReference type="EMDB" id="EMD-37565"/>
<dbReference type="EMDB" id="EMD-8932"/>
<dbReference type="EMDB" id="EMD-8934"/>
<dbReference type="SMR" id="A0R550"/>
<dbReference type="STRING" id="246196.MSMEG_6066"/>
<dbReference type="PaxDb" id="246196-MSMEI_5906"/>
<dbReference type="GeneID" id="93460698"/>
<dbReference type="KEGG" id="msb:LJ00_29995"/>
<dbReference type="KEGG" id="msg:MSMEI_5906"/>
<dbReference type="KEGG" id="msm:MSMEG_6066"/>
<dbReference type="PATRIC" id="fig|246196.19.peg.5904"/>
<dbReference type="eggNOG" id="COG0199">
    <property type="taxonomic scope" value="Bacteria"/>
</dbReference>
<dbReference type="OrthoDB" id="9810484at2"/>
<dbReference type="Proteomes" id="UP000000757">
    <property type="component" value="Chromosome"/>
</dbReference>
<dbReference type="Proteomes" id="UP000006158">
    <property type="component" value="Chromosome"/>
</dbReference>
<dbReference type="GO" id="GO:0015935">
    <property type="term" value="C:small ribosomal subunit"/>
    <property type="evidence" value="ECO:0007669"/>
    <property type="project" value="TreeGrafter"/>
</dbReference>
<dbReference type="GO" id="GO:0019843">
    <property type="term" value="F:rRNA binding"/>
    <property type="evidence" value="ECO:0007669"/>
    <property type="project" value="UniProtKB-UniRule"/>
</dbReference>
<dbReference type="GO" id="GO:0003735">
    <property type="term" value="F:structural constituent of ribosome"/>
    <property type="evidence" value="ECO:0007669"/>
    <property type="project" value="InterPro"/>
</dbReference>
<dbReference type="GO" id="GO:0006412">
    <property type="term" value="P:translation"/>
    <property type="evidence" value="ECO:0007669"/>
    <property type="project" value="UniProtKB-UniRule"/>
</dbReference>
<dbReference type="FunFam" id="1.10.287.1480:FF:000001">
    <property type="entry name" value="30S ribosomal protein S14"/>
    <property type="match status" value="1"/>
</dbReference>
<dbReference type="Gene3D" id="1.10.287.1480">
    <property type="match status" value="1"/>
</dbReference>
<dbReference type="HAMAP" id="MF_00537">
    <property type="entry name" value="Ribosomal_uS14_1"/>
    <property type="match status" value="1"/>
</dbReference>
<dbReference type="InterPro" id="IPR001209">
    <property type="entry name" value="Ribosomal_uS14"/>
</dbReference>
<dbReference type="InterPro" id="IPR023036">
    <property type="entry name" value="Ribosomal_uS14_bac/plastid"/>
</dbReference>
<dbReference type="NCBIfam" id="NF006477">
    <property type="entry name" value="PRK08881.1"/>
    <property type="match status" value="1"/>
</dbReference>
<dbReference type="PANTHER" id="PTHR19836">
    <property type="entry name" value="30S RIBOSOMAL PROTEIN S14"/>
    <property type="match status" value="1"/>
</dbReference>
<dbReference type="PANTHER" id="PTHR19836:SF23">
    <property type="entry name" value="SMALL RIBOSOMAL SUBUNIT PROTEIN US14A"/>
    <property type="match status" value="1"/>
</dbReference>
<dbReference type="Pfam" id="PF00253">
    <property type="entry name" value="Ribosomal_S14"/>
    <property type="match status" value="1"/>
</dbReference>
<dbReference type="SUPFAM" id="SSF57716">
    <property type="entry name" value="Glucocorticoid receptor-like (DNA-binding domain)"/>
    <property type="match status" value="1"/>
</dbReference>
<reference key="1">
    <citation type="submission" date="2006-10" db="EMBL/GenBank/DDBJ databases">
        <authorList>
            <person name="Fleischmann R.D."/>
            <person name="Dodson R.J."/>
            <person name="Haft D.H."/>
            <person name="Merkel J.S."/>
            <person name="Nelson W.C."/>
            <person name="Fraser C.M."/>
        </authorList>
    </citation>
    <scope>NUCLEOTIDE SEQUENCE [LARGE SCALE GENOMIC DNA]</scope>
    <source>
        <strain>ATCC 700084 / mc(2)155</strain>
    </source>
</reference>
<reference key="2">
    <citation type="journal article" date="2007" name="Genome Biol.">
        <title>Interrupted coding sequences in Mycobacterium smegmatis: authentic mutations or sequencing errors?</title>
        <authorList>
            <person name="Deshayes C."/>
            <person name="Perrodou E."/>
            <person name="Gallien S."/>
            <person name="Euphrasie D."/>
            <person name="Schaeffer C."/>
            <person name="Van-Dorsselaer A."/>
            <person name="Poch O."/>
            <person name="Lecompte O."/>
            <person name="Reyrat J.-M."/>
        </authorList>
    </citation>
    <scope>NUCLEOTIDE SEQUENCE [LARGE SCALE GENOMIC DNA]</scope>
    <source>
        <strain>ATCC 700084 / mc(2)155</strain>
    </source>
</reference>
<reference key="3">
    <citation type="journal article" date="2009" name="Genome Res.">
        <title>Ortho-proteogenomics: multiple proteomes investigation through orthology and a new MS-based protocol.</title>
        <authorList>
            <person name="Gallien S."/>
            <person name="Perrodou E."/>
            <person name="Carapito C."/>
            <person name="Deshayes C."/>
            <person name="Reyrat J.-M."/>
            <person name="Van Dorsselaer A."/>
            <person name="Poch O."/>
            <person name="Schaeffer C."/>
            <person name="Lecompte O."/>
        </authorList>
    </citation>
    <scope>NUCLEOTIDE SEQUENCE [LARGE SCALE GENOMIC DNA]</scope>
    <scope>IDENTIFICATION BY MASS SPECTROMETRY [LARGE SCALE ANALYSIS]</scope>
    <scope>CLEAVAGE OF INITIATOR METHIONINE</scope>
    <source>
        <strain>ATCC 700084 / mc(2)155</strain>
    </source>
</reference>
<accession>A0R550</accession>
<accession>I7GG11</accession>